<proteinExistence type="evidence at transcript level"/>
<accession>Q0IIE5</accession>
<organism>
    <name type="scientific">Bos taurus</name>
    <name type="common">Bovine</name>
    <dbReference type="NCBI Taxonomy" id="9913"/>
    <lineage>
        <taxon>Eukaryota</taxon>
        <taxon>Metazoa</taxon>
        <taxon>Chordata</taxon>
        <taxon>Craniata</taxon>
        <taxon>Vertebrata</taxon>
        <taxon>Euteleostomi</taxon>
        <taxon>Mammalia</taxon>
        <taxon>Eutheria</taxon>
        <taxon>Laurasiatheria</taxon>
        <taxon>Artiodactyla</taxon>
        <taxon>Ruminantia</taxon>
        <taxon>Pecora</taxon>
        <taxon>Bovidae</taxon>
        <taxon>Bovinae</taxon>
        <taxon>Bos</taxon>
    </lineage>
</organism>
<dbReference type="EMBL" id="BC122684">
    <property type="protein sequence ID" value="AAI22685.1"/>
    <property type="molecule type" value="mRNA"/>
</dbReference>
<dbReference type="RefSeq" id="NP_001069845.1">
    <property type="nucleotide sequence ID" value="NM_001076377.1"/>
</dbReference>
<dbReference type="SMR" id="Q0IIE5"/>
<dbReference type="FunCoup" id="Q0IIE5">
    <property type="interactions" value="313"/>
</dbReference>
<dbReference type="STRING" id="9913.ENSBTAP00000009534"/>
<dbReference type="PaxDb" id="9913-ENSBTAP00000009534"/>
<dbReference type="Ensembl" id="ENSBTAT00000009534.5">
    <property type="protein sequence ID" value="ENSBTAP00000009534.4"/>
    <property type="gene ID" value="ENSBTAG00000007246.5"/>
</dbReference>
<dbReference type="GeneID" id="615464"/>
<dbReference type="KEGG" id="bta:615464"/>
<dbReference type="CTD" id="79652"/>
<dbReference type="VEuPathDB" id="HostDB:ENSBTAG00000007246"/>
<dbReference type="VGNC" id="VGNC:36026">
    <property type="gene designation" value="TMEM204"/>
</dbReference>
<dbReference type="eggNOG" id="ENOG502QTQQ">
    <property type="taxonomic scope" value="Eukaryota"/>
</dbReference>
<dbReference type="GeneTree" id="ENSGT00390000015528"/>
<dbReference type="HOGENOM" id="CLU_107201_0_0_1"/>
<dbReference type="InParanoid" id="Q0IIE5"/>
<dbReference type="OMA" id="WKSCWLA"/>
<dbReference type="OrthoDB" id="9928383at2759"/>
<dbReference type="TreeFam" id="TF331492"/>
<dbReference type="Proteomes" id="UP000009136">
    <property type="component" value="Chromosome 25"/>
</dbReference>
<dbReference type="Bgee" id="ENSBTAG00000007246">
    <property type="expression patterns" value="Expressed in bone marrow and 104 other cell types or tissues"/>
</dbReference>
<dbReference type="GO" id="GO:0005912">
    <property type="term" value="C:adherens junction"/>
    <property type="evidence" value="ECO:0007669"/>
    <property type="project" value="UniProtKB-SubCell"/>
</dbReference>
<dbReference type="GO" id="GO:0005886">
    <property type="term" value="C:plasma membrane"/>
    <property type="evidence" value="ECO:0000318"/>
    <property type="project" value="GO_Central"/>
</dbReference>
<dbReference type="GO" id="GO:0001945">
    <property type="term" value="P:lymph vessel development"/>
    <property type="evidence" value="ECO:0000318"/>
    <property type="project" value="GO_Central"/>
</dbReference>
<dbReference type="GO" id="GO:0030947">
    <property type="term" value="P:regulation of vascular endothelial growth factor receptor signaling pathway"/>
    <property type="evidence" value="ECO:0000318"/>
    <property type="project" value="GO_Central"/>
</dbReference>
<dbReference type="GO" id="GO:0051145">
    <property type="term" value="P:smooth muscle cell differentiation"/>
    <property type="evidence" value="ECO:0000318"/>
    <property type="project" value="GO_Central"/>
</dbReference>
<dbReference type="FunFam" id="1.20.140.150:FF:000008">
    <property type="entry name" value="Transmembrane protein 204"/>
    <property type="match status" value="1"/>
</dbReference>
<dbReference type="Gene3D" id="1.20.140.150">
    <property type="match status" value="1"/>
</dbReference>
<dbReference type="InterPro" id="IPR038992">
    <property type="entry name" value="TMEM204"/>
</dbReference>
<dbReference type="PANTHER" id="PTHR14627">
    <property type="entry name" value="TRANSMEMBRANE PROTEIN 204"/>
    <property type="match status" value="1"/>
</dbReference>
<dbReference type="PANTHER" id="PTHR14627:SF0">
    <property type="entry name" value="TRANSMEMBRANE PROTEIN 204"/>
    <property type="match status" value="1"/>
</dbReference>
<name>TM204_BOVIN</name>
<gene>
    <name type="primary">TMEM204</name>
    <name type="synonym">CLP24</name>
</gene>
<protein>
    <recommendedName>
        <fullName>Transmembrane protein 204</fullName>
    </recommendedName>
    <alternativeName>
        <fullName>Claudin-like protein 24</fullName>
    </alternativeName>
</protein>
<evidence type="ECO:0000250" key="1"/>
<evidence type="ECO:0000255" key="2"/>
<sequence>MTVRKVVATAVLVALVSLVLNNAAAFTPNWVYQTLEDGRRRSVGLWWACWLVERPRGAPGPGARPGPADVRDCEALGWGSEAAGFQESRGTVKLQFDMMRACNLVATAALAAGQLTFVLGLTGLPLLSPDAQCWEEAMAAAFQLASFVLVIGLVTFYRIGPYTSLSWSCYLNIGACLLATLAAAMLIWNVLHRREDCTAPRVIVISRSLTARFRRGLDNDYVESPC</sequence>
<keyword id="KW-0965">Cell junction</keyword>
<keyword id="KW-1003">Cell membrane</keyword>
<keyword id="KW-0472">Membrane</keyword>
<keyword id="KW-1185">Reference proteome</keyword>
<keyword id="KW-0812">Transmembrane</keyword>
<keyword id="KW-1133">Transmembrane helix</keyword>
<reference key="1">
    <citation type="submission" date="2006-08" db="EMBL/GenBank/DDBJ databases">
        <authorList>
            <consortium name="NIH - Mammalian Gene Collection (MGC) project"/>
        </authorList>
    </citation>
    <scope>NUCLEOTIDE SEQUENCE [LARGE SCALE MRNA]</scope>
    <source>
        <strain>Hereford</strain>
        <tissue>Brain cortex</tissue>
    </source>
</reference>
<feature type="chain" id="PRO_0000283063" description="Transmembrane protein 204">
    <location>
        <begin position="1"/>
        <end position="226"/>
    </location>
</feature>
<feature type="topological domain" description="Cytoplasmic" evidence="2">
    <location>
        <begin position="1"/>
        <end position="5"/>
    </location>
</feature>
<feature type="transmembrane region" description="Helical" evidence="2">
    <location>
        <begin position="6"/>
        <end position="26"/>
    </location>
</feature>
<feature type="topological domain" description="Extracellular" evidence="2">
    <location>
        <begin position="27"/>
        <end position="103"/>
    </location>
</feature>
<feature type="transmembrane region" description="Helical" evidence="2">
    <location>
        <begin position="104"/>
        <end position="124"/>
    </location>
</feature>
<feature type="topological domain" description="Cytoplasmic" evidence="2">
    <location>
        <begin position="125"/>
        <end position="136"/>
    </location>
</feature>
<feature type="transmembrane region" description="Helical" evidence="2">
    <location>
        <begin position="137"/>
        <end position="157"/>
    </location>
</feature>
<feature type="topological domain" description="Extracellular" evidence="2">
    <location>
        <begin position="158"/>
        <end position="170"/>
    </location>
</feature>
<feature type="transmembrane region" description="Helical" evidence="2">
    <location>
        <begin position="171"/>
        <end position="191"/>
    </location>
</feature>
<feature type="topological domain" description="Cytoplasmic" evidence="2">
    <location>
        <begin position="192"/>
        <end position="226"/>
    </location>
</feature>
<comment type="function">
    <text evidence="1">Can influence paracellular permeability. Appears to be involved in cell-cell interactions through adherens (By similarity).</text>
</comment>
<comment type="subcellular location">
    <subcellularLocation>
        <location>Cell junction</location>
        <location>Adherens junction</location>
    </subcellularLocation>
    <subcellularLocation>
        <location evidence="1">Cell membrane</location>
        <topology evidence="1">Multi-pass membrane protein</topology>
    </subcellularLocation>
    <text evidence="1">Co-localizes with the beta-catenin adherins.</text>
</comment>